<dbReference type="EC" id="3.1.1.-" evidence="1"/>
<dbReference type="EMBL" id="AM933173">
    <property type="protein sequence ID" value="CAR39987.1"/>
    <property type="molecule type" value="Genomic_DNA"/>
</dbReference>
<dbReference type="RefSeq" id="WP_000049162.1">
    <property type="nucleotide sequence ID" value="NC_011274.1"/>
</dbReference>
<dbReference type="SMR" id="B5R9D9"/>
<dbReference type="KEGG" id="seg:SG4224"/>
<dbReference type="HOGENOM" id="CLU_074775_0_0_6"/>
<dbReference type="UniPathway" id="UPA00263">
    <property type="reaction ID" value="UER00377"/>
</dbReference>
<dbReference type="Proteomes" id="UP000008321">
    <property type="component" value="Chromosome"/>
</dbReference>
<dbReference type="GO" id="GO:0005737">
    <property type="term" value="C:cytoplasm"/>
    <property type="evidence" value="ECO:0007669"/>
    <property type="project" value="UniProtKB-SubCell"/>
</dbReference>
<dbReference type="GO" id="GO:0035460">
    <property type="term" value="F:L-ascorbate 6-phosphate lactonase activity"/>
    <property type="evidence" value="ECO:0007669"/>
    <property type="project" value="InterPro"/>
</dbReference>
<dbReference type="GO" id="GO:0030145">
    <property type="term" value="F:manganese ion binding"/>
    <property type="evidence" value="ECO:0007669"/>
    <property type="project" value="InterPro"/>
</dbReference>
<dbReference type="GO" id="GO:0019854">
    <property type="term" value="P:L-ascorbic acid catabolic process"/>
    <property type="evidence" value="ECO:0007669"/>
    <property type="project" value="UniProtKB-UniRule"/>
</dbReference>
<dbReference type="CDD" id="cd16284">
    <property type="entry name" value="UlaG-like_MBL-fold"/>
    <property type="match status" value="1"/>
</dbReference>
<dbReference type="FunFam" id="3.60.15.10:FF:000004">
    <property type="entry name" value="Probable L-ascorbate-6-phosphate lactonase UlaG"/>
    <property type="match status" value="1"/>
</dbReference>
<dbReference type="Gene3D" id="3.60.15.10">
    <property type="entry name" value="Ribonuclease Z/Hydroxyacylglutathione hydrolase-like"/>
    <property type="match status" value="1"/>
</dbReference>
<dbReference type="HAMAP" id="MF_01266">
    <property type="entry name" value="UlaG"/>
    <property type="match status" value="1"/>
</dbReference>
<dbReference type="InterPro" id="IPR023951">
    <property type="entry name" value="L-ascorbate_6P_UlaG"/>
</dbReference>
<dbReference type="InterPro" id="IPR001279">
    <property type="entry name" value="Metallo-B-lactamas"/>
</dbReference>
<dbReference type="InterPro" id="IPR036866">
    <property type="entry name" value="RibonucZ/Hydroxyglut_hydro"/>
</dbReference>
<dbReference type="InterPro" id="IPR048021">
    <property type="entry name" value="UlaG-like_MBL-fold"/>
</dbReference>
<dbReference type="InterPro" id="IPR050114">
    <property type="entry name" value="UPF0173_UPF0282_UlaG_hydrolase"/>
</dbReference>
<dbReference type="NCBIfam" id="NF008688">
    <property type="entry name" value="PRK11709.1"/>
    <property type="match status" value="1"/>
</dbReference>
<dbReference type="PANTHER" id="PTHR43546:SF9">
    <property type="entry name" value="L-ASCORBATE-6-PHOSPHATE LACTONASE ULAG-RELATED"/>
    <property type="match status" value="1"/>
</dbReference>
<dbReference type="PANTHER" id="PTHR43546">
    <property type="entry name" value="UPF0173 METAL-DEPENDENT HYDROLASE MJ1163-RELATED"/>
    <property type="match status" value="1"/>
</dbReference>
<dbReference type="Pfam" id="PF12706">
    <property type="entry name" value="Lactamase_B_2"/>
    <property type="match status" value="1"/>
</dbReference>
<dbReference type="SUPFAM" id="SSF56281">
    <property type="entry name" value="Metallo-hydrolase/oxidoreductase"/>
    <property type="match status" value="1"/>
</dbReference>
<proteinExistence type="inferred from homology"/>
<name>ULAG_SALG2</name>
<evidence type="ECO:0000255" key="1">
    <source>
        <dbReference type="HAMAP-Rule" id="MF_01266"/>
    </source>
</evidence>
<protein>
    <recommendedName>
        <fullName evidence="1">Probable L-ascorbate-6-phosphate lactonase UlaG</fullName>
        <ecNumber evidence="1">3.1.1.-</ecNumber>
    </recommendedName>
    <alternativeName>
        <fullName evidence="1">L-ascorbate utilization protein G</fullName>
    </alternativeName>
</protein>
<comment type="function">
    <text evidence="1">Probably catalyzes the hydrolysis of L-ascorbate-6-P into 3-keto-L-gulonate-6-P. Is essential for L-ascorbate utilization under anaerobic conditions.</text>
</comment>
<comment type="catalytic activity">
    <reaction evidence="1">
        <text>L-ascorbate 6-phosphate + H2O = 3-dehydro-L-gulonate 6-phosphate</text>
        <dbReference type="Rhea" id="RHEA:28803"/>
        <dbReference type="ChEBI" id="CHEBI:15377"/>
        <dbReference type="ChEBI" id="CHEBI:58774"/>
        <dbReference type="ChEBI" id="CHEBI:61698"/>
    </reaction>
</comment>
<comment type="cofactor">
    <cofactor evidence="1">
        <name>a divalent metal cation</name>
        <dbReference type="ChEBI" id="CHEBI:60240"/>
    </cofactor>
</comment>
<comment type="pathway">
    <text evidence="1">Cofactor degradation; L-ascorbate degradation; D-xylulose 5-phosphate from L-ascorbate: step 1/4.</text>
</comment>
<comment type="subcellular location">
    <subcellularLocation>
        <location evidence="1">Cytoplasm</location>
    </subcellularLocation>
</comment>
<comment type="induction">
    <text evidence="1">Induced by L-ascorbate. Repressed by UlaR.</text>
</comment>
<comment type="similarity">
    <text evidence="1">Belongs to the UlaG family.</text>
</comment>
<feature type="chain" id="PRO_1000140103" description="Probable L-ascorbate-6-phosphate lactonase UlaG">
    <location>
        <begin position="1"/>
        <end position="354"/>
    </location>
</feature>
<organism>
    <name type="scientific">Salmonella gallinarum (strain 287/91 / NCTC 13346)</name>
    <dbReference type="NCBI Taxonomy" id="550538"/>
    <lineage>
        <taxon>Bacteria</taxon>
        <taxon>Pseudomonadati</taxon>
        <taxon>Pseudomonadota</taxon>
        <taxon>Gammaproteobacteria</taxon>
        <taxon>Enterobacterales</taxon>
        <taxon>Enterobacteriaceae</taxon>
        <taxon>Salmonella</taxon>
    </lineage>
</organism>
<gene>
    <name evidence="1" type="primary">ulaG</name>
    <name type="ordered locus">SG4224</name>
</gene>
<keyword id="KW-0963">Cytoplasm</keyword>
<keyword id="KW-0378">Hydrolase</keyword>
<sequence length="354" mass="40103">MSKVQSITRESWILSTFPEWGSWLNEEIEQEQVAPGTFAMWWLGCTGIWLKSEGGTNVCVDFWCGTGKQSHGNPLMKTGHQMQRMAGVKKLQPNLRTTPFVLDPFAIRQIDAVLATHDHNDHIDVNVAAAVMQNCADDVPFIGPQTCVDLWVGWGVPKERCIVVKPGDVVKVKDIEIHALDAFDRTALITLPADQKAAGVLPDGMDVRAVNYLFKTPGGNLYHSGDSHYSNYYAKHGNEHQIDVALGSYGENPRGITDKMTSTDILRMAESLNTKVVIPFHHDIWSNFQADPQEIRVLWEMKKDRLKYGFKPFIWQVGGKFTWPLDKDNFEYHYPRGFDDCFTIEPDLPFKSFL</sequence>
<accession>B5R9D9</accession>
<reference key="1">
    <citation type="journal article" date="2008" name="Genome Res.">
        <title>Comparative genome analysis of Salmonella enteritidis PT4 and Salmonella gallinarum 287/91 provides insights into evolutionary and host adaptation pathways.</title>
        <authorList>
            <person name="Thomson N.R."/>
            <person name="Clayton D.J."/>
            <person name="Windhorst D."/>
            <person name="Vernikos G."/>
            <person name="Davidson S."/>
            <person name="Churcher C."/>
            <person name="Quail M.A."/>
            <person name="Stevens M."/>
            <person name="Jones M.A."/>
            <person name="Watson M."/>
            <person name="Barron A."/>
            <person name="Layton A."/>
            <person name="Pickard D."/>
            <person name="Kingsley R.A."/>
            <person name="Bignell A."/>
            <person name="Clark L."/>
            <person name="Harris B."/>
            <person name="Ormond D."/>
            <person name="Abdellah Z."/>
            <person name="Brooks K."/>
            <person name="Cherevach I."/>
            <person name="Chillingworth T."/>
            <person name="Woodward J."/>
            <person name="Norberczak H."/>
            <person name="Lord A."/>
            <person name="Arrowsmith C."/>
            <person name="Jagels K."/>
            <person name="Moule S."/>
            <person name="Mungall K."/>
            <person name="Saunders M."/>
            <person name="Whitehead S."/>
            <person name="Chabalgoity J.A."/>
            <person name="Maskell D."/>
            <person name="Humphreys T."/>
            <person name="Roberts M."/>
            <person name="Barrow P.A."/>
            <person name="Dougan G."/>
            <person name="Parkhill J."/>
        </authorList>
    </citation>
    <scope>NUCLEOTIDE SEQUENCE [LARGE SCALE GENOMIC DNA]</scope>
    <source>
        <strain>287/91 / NCTC 13346</strain>
    </source>
</reference>